<comment type="subcellular location">
    <subcellularLocation>
        <location evidence="3">Secreted</location>
    </subcellularLocation>
</comment>
<comment type="tissue specificity">
    <text evidence="2">Expressed in lacrimal gland, at higher level in males than females. Expressed in the submandibular gland.</text>
</comment>
<comment type="similarity">
    <text evidence="3">Belongs to the secretoglobin family.</text>
</comment>
<reference key="1">
    <citation type="journal article" date="2005" name="Invest. Ophthalmol. Vis. Sci.">
        <title>Secretoglobins: sexually dimorphic expression of androgen-binding protein mRNA in mouse lacrimal glands.</title>
        <authorList>
            <person name="Remington S.G."/>
            <person name="Nelson J.D."/>
        </authorList>
    </citation>
    <scope>NUCLEOTIDE SEQUENCE [MRNA]</scope>
    <scope>TISSUE SPECIFICITY</scope>
    <source>
        <strain>Swiss Webster</strain>
        <tissue>Lacrimal gland</tissue>
    </source>
</reference>
<reference key="2">
    <citation type="submission" date="1999-03" db="EMBL/GenBank/DDBJ databases">
        <title>The WashU-NCI mouse EST project 1999.</title>
        <authorList>
            <person name="Marra M."/>
            <person name="Hillier L."/>
            <person name="Kucaba T."/>
            <person name="Martin J."/>
            <person name="Beck C."/>
            <person name="Wylie T."/>
            <person name="Underwood K."/>
            <person name="Steptoe M."/>
            <person name="Theising B."/>
            <person name="Allen M."/>
            <person name="Bowers Y."/>
            <person name="Person B."/>
            <person name="Swaller T."/>
            <person name="Gibbons M."/>
            <person name="Pape D."/>
            <person name="Harvey N."/>
            <person name="Schurk R."/>
            <person name="Ritter E."/>
            <person name="Kohn S."/>
            <person name="Shin T."/>
            <person name="Jackson Y."/>
            <person name="Cardenas M."/>
            <person name="McCann R."/>
            <person name="Waterston R."/>
            <person name="Wilson R."/>
        </authorList>
    </citation>
    <scope>NUCLEOTIDE SEQUENCE [MRNA] OF 4-95</scope>
    <source>
        <strain>C57BL/6J</strain>
        <tissue>Skin</tissue>
    </source>
</reference>
<reference key="3">
    <citation type="journal article" date="2002" name="Am. J. Respir. Crit. Care Med.">
        <title>Secretoglobins SCGB3A1 and SCGB3A2 define secretory cell subsets in mouse and human airways.</title>
        <authorList>
            <person name="Reynolds S.D."/>
            <person name="Reynolds P.R."/>
            <person name="Pryhuber G.S."/>
            <person name="Finder J.D."/>
            <person name="Stripp B.R."/>
        </authorList>
    </citation>
    <scope>IDENTIFICATION</scope>
</reference>
<feature type="signal peptide" evidence="1">
    <location>
        <begin position="1"/>
        <end position="23"/>
    </location>
</feature>
<feature type="chain" id="PRO_0000342374" description="Secretoglobin family 2B member 20">
    <location>
        <begin position="24"/>
        <end position="112"/>
    </location>
</feature>
<feature type="glycosylation site" description="N-linked (GlcNAc...) asparagine" evidence="1">
    <location>
        <position position="50"/>
    </location>
</feature>
<feature type="sequence conflict" description="In Ref. 2; AA727521." evidence="3" ref="2">
    <original>TE</original>
    <variation>K</variation>
    <location>
        <begin position="21"/>
        <end position="22"/>
    </location>
</feature>
<feature type="sequence conflict" description="In Ref. 2; AA727521." evidence="3" ref="2">
    <original>F</original>
    <variation>Y</variation>
    <location>
        <position position="66"/>
    </location>
</feature>
<proteinExistence type="evidence at transcript level"/>
<organism>
    <name type="scientific">Mus musculus</name>
    <name type="common">Mouse</name>
    <dbReference type="NCBI Taxonomy" id="10090"/>
    <lineage>
        <taxon>Eukaryota</taxon>
        <taxon>Metazoa</taxon>
        <taxon>Chordata</taxon>
        <taxon>Craniata</taxon>
        <taxon>Vertebrata</taxon>
        <taxon>Euteleostomi</taxon>
        <taxon>Mammalia</taxon>
        <taxon>Eutheria</taxon>
        <taxon>Euarchontoglires</taxon>
        <taxon>Glires</taxon>
        <taxon>Rodentia</taxon>
        <taxon>Myomorpha</taxon>
        <taxon>Muroidea</taxon>
        <taxon>Muridae</taxon>
        <taxon>Murinae</taxon>
        <taxon>Mus</taxon>
        <taxon>Mus</taxon>
    </lineage>
</organism>
<gene>
    <name type="primary">Scgb2b20</name>
    <name type="synonym">Abpd</name>
</gene>
<dbReference type="EMBL" id="AF272844">
    <property type="protein sequence ID" value="AAF81793.1"/>
    <property type="molecule type" value="mRNA"/>
</dbReference>
<dbReference type="EMBL" id="AA727521">
    <property type="status" value="NOT_ANNOTATED_CDS"/>
    <property type="molecule type" value="mRNA"/>
</dbReference>
<dbReference type="EMBL" id="BK000195">
    <property type="protein sequence ID" value="DAA00352.1"/>
    <property type="molecule type" value="mRNA"/>
</dbReference>
<dbReference type="CCDS" id="CCDS21131.1"/>
<dbReference type="SMR" id="Q9JI02"/>
<dbReference type="STRING" id="10090.ENSMUSP00000137484"/>
<dbReference type="GlyCosmos" id="Q9JI02">
    <property type="glycosylation" value="1 site, No reported glycans"/>
</dbReference>
<dbReference type="GlyGen" id="Q9JI02">
    <property type="glycosylation" value="1 site"/>
</dbReference>
<dbReference type="PhosphoSitePlus" id="Q9JI02"/>
<dbReference type="PaxDb" id="10090-ENSMUSP00000137484"/>
<dbReference type="AGR" id="MGI:3514009"/>
<dbReference type="MGI" id="MGI:3514009">
    <property type="gene designation" value="Scgb2b20"/>
</dbReference>
<dbReference type="eggNOG" id="ENOG502RU0W">
    <property type="taxonomic scope" value="Eukaryota"/>
</dbReference>
<dbReference type="InParanoid" id="Q9JI02"/>
<dbReference type="PhylomeDB" id="Q9JI02"/>
<dbReference type="PRO" id="PR:Q9JI02"/>
<dbReference type="Proteomes" id="UP000000589">
    <property type="component" value="Unplaced"/>
</dbReference>
<dbReference type="RNAct" id="Q9JI02">
    <property type="molecule type" value="protein"/>
</dbReference>
<dbReference type="GO" id="GO:0005615">
    <property type="term" value="C:extracellular space"/>
    <property type="evidence" value="ECO:0007669"/>
    <property type="project" value="InterPro"/>
</dbReference>
<dbReference type="CDD" id="cd00633">
    <property type="entry name" value="Secretoglobin"/>
    <property type="match status" value="1"/>
</dbReference>
<dbReference type="Gene3D" id="1.20.920.50">
    <property type="match status" value="1"/>
</dbReference>
<dbReference type="InterPro" id="IPR015332">
    <property type="entry name" value="CH2-like"/>
</dbReference>
<dbReference type="InterPro" id="IPR016126">
    <property type="entry name" value="Secretoglobin"/>
</dbReference>
<dbReference type="InterPro" id="IPR053723">
    <property type="entry name" value="Secretoglobin_Domain_sf"/>
</dbReference>
<dbReference type="InterPro" id="IPR035960">
    <property type="entry name" value="Secretoglobin_sf"/>
</dbReference>
<dbReference type="PANTHER" id="PTHR31708:SF1">
    <property type="entry name" value="ABPBG11-RELATED"/>
    <property type="match status" value="1"/>
</dbReference>
<dbReference type="PANTHER" id="PTHR31708">
    <property type="entry name" value="ABPBG26-RELATED"/>
    <property type="match status" value="1"/>
</dbReference>
<dbReference type="Pfam" id="PF09252">
    <property type="entry name" value="Feld-I_B"/>
    <property type="match status" value="1"/>
</dbReference>
<dbReference type="SUPFAM" id="SSF48201">
    <property type="entry name" value="Uteroglobin-like"/>
    <property type="match status" value="1"/>
</dbReference>
<dbReference type="PROSITE" id="PS51311">
    <property type="entry name" value="SCGB"/>
    <property type="match status" value="1"/>
</dbReference>
<sequence length="112" mass="12590">MKGTLLLLGLLVTGELSFQTTEACLPFFEGYASVLSGSRVWLYQELQAFNATAEEKVALEKIQDCFSEERIRNILLEPKIMEAMVASPECLSYYGLDNIRSILDYISKLLGE</sequence>
<name>S2B20_MOUSE</name>
<keyword id="KW-0020">Allergen</keyword>
<keyword id="KW-0325">Glycoprotein</keyword>
<keyword id="KW-1185">Reference proteome</keyword>
<keyword id="KW-0964">Secreted</keyword>
<keyword id="KW-0732">Signal</keyword>
<accession>Q9JI02</accession>
<accession>Q7M746</accession>
<evidence type="ECO:0000255" key="1"/>
<evidence type="ECO:0000269" key="2">
    <source>
    </source>
</evidence>
<evidence type="ECO:0000305" key="3"/>
<protein>
    <recommendedName>
        <fullName>Secretoglobin family 2B member 20</fullName>
    </recommendedName>
    <alternativeName>
        <fullName>Allergen dI chain C2C</fullName>
    </alternativeName>
    <alternativeName>
        <fullName>Androgen-binding protein delta</fullName>
    </alternativeName>
    <alternativeName>
        <fullName>Lacrimal androgen-binding protein delta</fullName>
    </alternativeName>
</protein>